<comment type="function">
    <text evidence="1">Putative tyrosine recombinase. Not involved in the cutting and rejoining of the recombining DNA molecules on dif(SL) site.</text>
</comment>
<comment type="subcellular location">
    <subcellularLocation>
        <location evidence="1">Cytoplasm</location>
    </subcellularLocation>
</comment>
<comment type="similarity">
    <text evidence="1">Belongs to the 'phage' integrase family. XerD-like subfamily.</text>
</comment>
<feature type="chain" id="PRO_1000070255" description="Tyrosine recombinase XerD-like">
    <location>
        <begin position="1"/>
        <end position="248"/>
    </location>
</feature>
<feature type="domain" description="Core-binding (CB)" evidence="3">
    <location>
        <begin position="1"/>
        <end position="72"/>
    </location>
</feature>
<feature type="domain" description="Tyr recombinase" evidence="2">
    <location>
        <begin position="85"/>
        <end position="248"/>
    </location>
</feature>
<feature type="active site" evidence="2">
    <location>
        <position position="149"/>
    </location>
</feature>
<feature type="active site" evidence="2">
    <location>
        <position position="213"/>
    </location>
</feature>
<feature type="active site" description="O-(3'-phospho-DNA)-tyrosine intermediate" evidence="2">
    <location>
        <position position="245"/>
    </location>
</feature>
<sequence>MKSYIEPFIASKALSQNSQKAYRYDLQQFCQLVGERVNQDKLLLYQNSIANLSLSAKKRKLSTANQFLYYLYQIKYLNSYFRLTDTMKVMRTEKQQAAIINTDIFYQKTPFVWGQLISLLILELGLTPSEVAGIEVANLDLNFQMLTLKTKKGVRVLPLSQILIPFLEQQLVGKEVYLFEHRGIPFSRQWFFNHLKTFVRSIGYEGLTAQKLREQFILKEKLAGKSIIELSDILGLKSPVTLEKYYKS</sequence>
<proteinExistence type="inferred from homology"/>
<keyword id="KW-0963">Cytoplasm</keyword>
<keyword id="KW-0229">DNA integration</keyword>
<keyword id="KW-0233">DNA recombination</keyword>
<keyword id="KW-0238">DNA-binding</keyword>
<organism>
    <name type="scientific">Streptococcus pyogenes serotype M12 (strain MGAS2096)</name>
    <dbReference type="NCBI Taxonomy" id="370553"/>
    <lineage>
        <taxon>Bacteria</taxon>
        <taxon>Bacillati</taxon>
        <taxon>Bacillota</taxon>
        <taxon>Bacilli</taxon>
        <taxon>Lactobacillales</taxon>
        <taxon>Streptococcaceae</taxon>
        <taxon>Streptococcus</taxon>
    </lineage>
</organism>
<gene>
    <name type="ordered locus">MGAS2096_Spy0324</name>
</gene>
<reference key="1">
    <citation type="journal article" date="2006" name="Proc. Natl. Acad. Sci. U.S.A.">
        <title>Molecular genetic anatomy of inter- and intraserotype variation in the human bacterial pathogen group A Streptococcus.</title>
        <authorList>
            <person name="Beres S.B."/>
            <person name="Richter E.W."/>
            <person name="Nagiec M.J."/>
            <person name="Sumby P."/>
            <person name="Porcella S.F."/>
            <person name="DeLeo F.R."/>
            <person name="Musser J.M."/>
        </authorList>
    </citation>
    <scope>NUCLEOTIDE SEQUENCE [LARGE SCALE GENOMIC DNA]</scope>
    <source>
        <strain>MGAS2096</strain>
    </source>
</reference>
<evidence type="ECO:0000255" key="1">
    <source>
        <dbReference type="HAMAP-Rule" id="MF_01817"/>
    </source>
</evidence>
<evidence type="ECO:0000255" key="2">
    <source>
        <dbReference type="PROSITE-ProRule" id="PRU01246"/>
    </source>
</evidence>
<evidence type="ECO:0000255" key="3">
    <source>
        <dbReference type="PROSITE-ProRule" id="PRU01248"/>
    </source>
</evidence>
<name>XERDL_STRPB</name>
<protein>
    <recommendedName>
        <fullName evidence="1">Tyrosine recombinase XerD-like</fullName>
    </recommendedName>
</protein>
<dbReference type="EMBL" id="CP000261">
    <property type="protein sequence ID" value="ABF35376.1"/>
    <property type="molecule type" value="Genomic_DNA"/>
</dbReference>
<dbReference type="SMR" id="Q1JDD2"/>
<dbReference type="KEGG" id="spj:MGAS2096_Spy0324"/>
<dbReference type="HOGENOM" id="CLU_1128554_0_0_9"/>
<dbReference type="GO" id="GO:0005737">
    <property type="term" value="C:cytoplasm"/>
    <property type="evidence" value="ECO:0007669"/>
    <property type="project" value="UniProtKB-SubCell"/>
</dbReference>
<dbReference type="GO" id="GO:0003677">
    <property type="term" value="F:DNA binding"/>
    <property type="evidence" value="ECO:0007669"/>
    <property type="project" value="UniProtKB-KW"/>
</dbReference>
<dbReference type="GO" id="GO:0009037">
    <property type="term" value="F:tyrosine-based site-specific recombinase activity"/>
    <property type="evidence" value="ECO:0007669"/>
    <property type="project" value="UniProtKB-UniRule"/>
</dbReference>
<dbReference type="GO" id="GO:0006313">
    <property type="term" value="P:DNA transposition"/>
    <property type="evidence" value="ECO:0007669"/>
    <property type="project" value="UniProtKB-UniRule"/>
</dbReference>
<dbReference type="CDD" id="cd01190">
    <property type="entry name" value="INT_StrepXerD_C_like"/>
    <property type="match status" value="1"/>
</dbReference>
<dbReference type="Gene3D" id="1.10.150.130">
    <property type="match status" value="1"/>
</dbReference>
<dbReference type="Gene3D" id="1.10.443.10">
    <property type="entry name" value="Intergrase catalytic core"/>
    <property type="match status" value="1"/>
</dbReference>
<dbReference type="HAMAP" id="MF_01817">
    <property type="entry name" value="Recomb_XerD_like"/>
    <property type="match status" value="1"/>
</dbReference>
<dbReference type="InterPro" id="IPR044068">
    <property type="entry name" value="CB"/>
</dbReference>
<dbReference type="InterPro" id="IPR011010">
    <property type="entry name" value="DNA_brk_join_enz"/>
</dbReference>
<dbReference type="InterPro" id="IPR013762">
    <property type="entry name" value="Integrase-like_cat_sf"/>
</dbReference>
<dbReference type="InterPro" id="IPR002104">
    <property type="entry name" value="Integrase_catalytic"/>
</dbReference>
<dbReference type="InterPro" id="IPR010998">
    <property type="entry name" value="Integrase_recombinase_N"/>
</dbReference>
<dbReference type="InterPro" id="IPR020876">
    <property type="entry name" value="Tyrosine_recombinase_XerD-like"/>
</dbReference>
<dbReference type="NCBIfam" id="NF002685">
    <property type="entry name" value="PRK02436.1"/>
    <property type="match status" value="1"/>
</dbReference>
<dbReference type="SUPFAM" id="SSF56349">
    <property type="entry name" value="DNA breaking-rejoining enzymes"/>
    <property type="match status" value="1"/>
</dbReference>
<dbReference type="PROSITE" id="PS51900">
    <property type="entry name" value="CB"/>
    <property type="match status" value="1"/>
</dbReference>
<dbReference type="PROSITE" id="PS51898">
    <property type="entry name" value="TYR_RECOMBINASE"/>
    <property type="match status" value="1"/>
</dbReference>
<accession>Q1JDD2</accession>